<keyword id="KW-0002">3D-structure</keyword>
<keyword id="KW-0056">Arginine metabolism</keyword>
<keyword id="KW-0963">Cytoplasm</keyword>
<keyword id="KW-0903">Direct protein sequencing</keyword>
<keyword id="KW-0325">Glycoprotein</keyword>
<keyword id="KW-0378">Hydrolase</keyword>
<evidence type="ECO:0000250" key="1"/>
<evidence type="ECO:0000269" key="2">
    <source>
    </source>
</evidence>
<evidence type="ECO:0000269" key="3">
    <source ref="1"/>
</evidence>
<evidence type="ECO:0000305" key="4"/>
<evidence type="ECO:0007829" key="5">
    <source>
        <dbReference type="PDB" id="4BOF"/>
    </source>
</evidence>
<comment type="function">
    <text evidence="1">Antitumor protein. Has a powerful and dose-dependent inhibitory effect on antigen, superantigen, or mitogen-stimulated human peripheral blood mononuclear cell (PBMC) proliferation. It may inhibit cell proliferation by arresting cell cycle and inducing apoptosis (By similarity).</text>
</comment>
<comment type="catalytic activity">
    <reaction>
        <text>L-arginine + H2O = L-citrulline + NH4(+)</text>
        <dbReference type="Rhea" id="RHEA:19597"/>
        <dbReference type="ChEBI" id="CHEBI:15377"/>
        <dbReference type="ChEBI" id="CHEBI:28938"/>
        <dbReference type="ChEBI" id="CHEBI:32682"/>
        <dbReference type="ChEBI" id="CHEBI:57743"/>
        <dbReference type="EC" id="3.5.3.6"/>
    </reaction>
</comment>
<comment type="pathway">
    <text>Amino-acid degradation; L-arginine degradation via ADI pathway; carbamoyl phosphate from L-arginine: step 1/2.</text>
</comment>
<comment type="subunit">
    <text evidence="2">Homotetramer. The recombinant protein is a homodimer.</text>
</comment>
<comment type="subcellular location">
    <subcellularLocation>
        <location evidence="4">Cytoplasm</location>
    </subcellularLocation>
</comment>
<comment type="PTM">
    <text>Glycosylated.</text>
</comment>
<comment type="similarity">
    <text evidence="4">Belongs to the arginine deiminase family.</text>
</comment>
<reference key="1">
    <citation type="journal article" date="1987" name="Agric. Biol. Chem.">
        <title>Cloning and expression of the antitumor glycoprotein gene of Streptococcus pyogenes Su in Escherichia coli.</title>
        <authorList>
            <person name="Kanaoka M."/>
            <person name="Kawanaka C."/>
            <person name="Negoro T."/>
            <person name="Fukita Y."/>
            <person name="Taya K."/>
            <person name="Agui H."/>
        </authorList>
    </citation>
    <scope>NUCLEOTIDE SEQUENCE [GENOMIC DNA]</scope>
    <scope>PROTEIN SEQUENCE OF 2-26</scope>
    <source>
        <strain>ATCC 21060 / Su / DSM 2072</strain>
    </source>
</reference>
<reference key="2">
    <citation type="journal article" date="1991" name="Agric. Biol. Chem.">
        <title>Streptococcal antitumor protein: expression in Escherichia coli cells and properties of the recombinant protein.</title>
        <authorList>
            <person name="Kanaoka M."/>
            <person name="Negoro T."/>
            <person name="Kawanaka C."/>
            <person name="Agui H."/>
            <person name="Nabeshima S."/>
        </authorList>
    </citation>
    <scope>NUCLEOTIDE SEQUENCE [GENOMIC DNA] OF 1-57</scope>
    <scope>SUBUNIT</scope>
</reference>
<protein>
    <recommendedName>
        <fullName>Arginine deiminase</fullName>
        <shortName>ADI</shortName>
        <ecNumber>3.5.3.6</ecNumber>
    </recommendedName>
    <alternativeName>
        <fullName>Arginine dihydrolase</fullName>
        <shortName>AD</shortName>
    </alternativeName>
    <alternativeName>
        <fullName>Streptococcal acid glycoprotein</fullName>
    </alternativeName>
</protein>
<feature type="initiator methionine" description="Removed" evidence="3">
    <location>
        <position position="1"/>
    </location>
</feature>
<feature type="chain" id="PRO_0000182247" description="Arginine deiminase">
    <location>
        <begin position="2"/>
        <end position="411"/>
    </location>
</feature>
<feature type="active site" description="Amidino-cysteine intermediate" evidence="1">
    <location>
        <position position="401"/>
    </location>
</feature>
<feature type="strand" evidence="5">
    <location>
        <begin position="12"/>
        <end position="14"/>
    </location>
</feature>
<feature type="strand" evidence="5">
    <location>
        <begin position="16"/>
        <end position="21"/>
    </location>
</feature>
<feature type="turn" evidence="5">
    <location>
        <begin position="26"/>
        <end position="30"/>
    </location>
</feature>
<feature type="helix" evidence="5">
    <location>
        <begin position="33"/>
        <end position="35"/>
    </location>
</feature>
<feature type="turn" evidence="5">
    <location>
        <begin position="36"/>
        <end position="40"/>
    </location>
</feature>
<feature type="helix" evidence="5">
    <location>
        <begin position="47"/>
        <end position="62"/>
    </location>
</feature>
<feature type="turn" evidence="5">
    <location>
        <begin position="63"/>
        <end position="65"/>
    </location>
</feature>
<feature type="strand" evidence="5">
    <location>
        <begin position="67"/>
        <end position="70"/>
    </location>
</feature>
<feature type="helix" evidence="5">
    <location>
        <begin position="71"/>
        <end position="76"/>
    </location>
</feature>
<feature type="helix" evidence="5">
    <location>
        <begin position="82"/>
        <end position="94"/>
    </location>
</feature>
<feature type="turn" evidence="5">
    <location>
        <begin position="95"/>
        <end position="97"/>
    </location>
</feature>
<feature type="helix" evidence="5">
    <location>
        <begin position="101"/>
        <end position="112"/>
    </location>
</feature>
<feature type="helix" evidence="5">
    <location>
        <begin position="117"/>
        <end position="126"/>
    </location>
</feature>
<feature type="helix" evidence="5">
    <location>
        <begin position="130"/>
        <end position="132"/>
    </location>
</feature>
<feature type="helix" evidence="5">
    <location>
        <begin position="138"/>
        <end position="140"/>
    </location>
</feature>
<feature type="helix" evidence="5">
    <location>
        <begin position="143"/>
        <end position="146"/>
    </location>
</feature>
<feature type="strand" evidence="5">
    <location>
        <begin position="153"/>
        <end position="155"/>
    </location>
</feature>
<feature type="helix" evidence="5">
    <location>
        <begin position="159"/>
        <end position="162"/>
    </location>
</feature>
<feature type="strand" evidence="5">
    <location>
        <begin position="166"/>
        <end position="172"/>
    </location>
</feature>
<feature type="strand" evidence="5">
    <location>
        <begin position="174"/>
        <end position="177"/>
    </location>
</feature>
<feature type="helix" evidence="5">
    <location>
        <begin position="185"/>
        <end position="189"/>
    </location>
</feature>
<feature type="helix" evidence="5">
    <location>
        <begin position="190"/>
        <end position="198"/>
    </location>
</feature>
<feature type="turn" evidence="5">
    <location>
        <begin position="200"/>
        <end position="202"/>
    </location>
</feature>
<feature type="strand" evidence="5">
    <location>
        <begin position="209"/>
        <end position="211"/>
    </location>
</feature>
<feature type="helix" evidence="5">
    <location>
        <begin position="221"/>
        <end position="223"/>
    </location>
</feature>
<feature type="strand" evidence="5">
    <location>
        <begin position="224"/>
        <end position="226"/>
    </location>
</feature>
<feature type="strand" evidence="5">
    <location>
        <begin position="228"/>
        <end position="236"/>
    </location>
</feature>
<feature type="strand" evidence="5">
    <location>
        <begin position="238"/>
        <end position="240"/>
    </location>
</feature>
<feature type="helix" evidence="5">
    <location>
        <begin position="242"/>
        <end position="254"/>
    </location>
</feature>
<feature type="strand" evidence="5">
    <location>
        <begin position="261"/>
        <end position="266"/>
    </location>
</feature>
<feature type="helix" evidence="5">
    <location>
        <begin position="276"/>
        <end position="278"/>
    </location>
</feature>
<feature type="strand" evidence="5">
    <location>
        <begin position="280"/>
        <end position="284"/>
    </location>
</feature>
<feature type="strand" evidence="5">
    <location>
        <begin position="287"/>
        <end position="290"/>
    </location>
</feature>
<feature type="helix" evidence="5">
    <location>
        <begin position="292"/>
        <end position="295"/>
    </location>
</feature>
<feature type="strand" evidence="5">
    <location>
        <begin position="299"/>
        <end position="305"/>
    </location>
</feature>
<feature type="strand" evidence="5">
    <location>
        <begin position="308"/>
        <end position="315"/>
    </location>
</feature>
<feature type="helix" evidence="5">
    <location>
        <begin position="319"/>
        <end position="327"/>
    </location>
</feature>
<feature type="strand" evidence="5">
    <location>
        <begin position="333"/>
        <end position="336"/>
    </location>
</feature>
<feature type="helix" evidence="5">
    <location>
        <begin position="342"/>
        <end position="350"/>
    </location>
</feature>
<feature type="turn" evidence="5">
    <location>
        <begin position="351"/>
        <end position="354"/>
    </location>
</feature>
<feature type="strand" evidence="5">
    <location>
        <begin position="357"/>
        <end position="360"/>
    </location>
</feature>
<feature type="strand" evidence="5">
    <location>
        <begin position="363"/>
        <end position="367"/>
    </location>
</feature>
<feature type="helix" evidence="5">
    <location>
        <begin position="371"/>
        <end position="379"/>
    </location>
</feature>
<feature type="strand" evidence="5">
    <location>
        <begin position="383"/>
        <end position="387"/>
    </location>
</feature>
<feature type="helix" evidence="5">
    <location>
        <begin position="392"/>
        <end position="395"/>
    </location>
</feature>
<feature type="turn" evidence="5">
    <location>
        <begin position="399"/>
        <end position="402"/>
    </location>
</feature>
<feature type="strand" evidence="5">
    <location>
        <begin position="404"/>
        <end position="408"/>
    </location>
</feature>
<gene>
    <name type="primary">arcA</name>
    <name type="synonym">sagP</name>
</gene>
<proteinExistence type="evidence at protein level"/>
<organism>
    <name type="scientific">Streptococcus pyogenes</name>
    <dbReference type="NCBI Taxonomy" id="1314"/>
    <lineage>
        <taxon>Bacteria</taxon>
        <taxon>Bacillati</taxon>
        <taxon>Bacillota</taxon>
        <taxon>Bacilli</taxon>
        <taxon>Lactobacillales</taxon>
        <taxon>Streptococcaceae</taxon>
        <taxon>Streptococcus</taxon>
    </lineage>
</organism>
<accession>P0C0B3</accession>
<accession>P16962</accession>
<accession>P68769</accession>
<dbReference type="EC" id="3.5.3.6"/>
<dbReference type="EMBL" id="D13790">
    <property type="protein sequence ID" value="BAA02938.1"/>
    <property type="molecule type" value="Genomic_DNA"/>
</dbReference>
<dbReference type="EMBL" id="X55659">
    <property type="protein sequence ID" value="CAA39192.1"/>
    <property type="molecule type" value="Genomic_DNA"/>
</dbReference>
<dbReference type="PIR" id="A38835">
    <property type="entry name" value="A38835"/>
</dbReference>
<dbReference type="RefSeq" id="WP_002983803.1">
    <property type="nucleotide sequence ID" value="NZ_WXZI01000007.1"/>
</dbReference>
<dbReference type="PDB" id="4BOF">
    <property type="method" value="X-ray"/>
    <property type="resolution" value="2.48 A"/>
    <property type="chains" value="A/B/C/D/E/F/G/H=1-411"/>
</dbReference>
<dbReference type="PDBsum" id="4BOF"/>
<dbReference type="SMR" id="P0C0B3"/>
<dbReference type="STRING" id="1314.SD89_06725"/>
<dbReference type="GeneID" id="69900567"/>
<dbReference type="eggNOG" id="COG2235">
    <property type="taxonomic scope" value="Bacteria"/>
</dbReference>
<dbReference type="OMA" id="CMSMPLI"/>
<dbReference type="UniPathway" id="UPA00254">
    <property type="reaction ID" value="UER00364"/>
</dbReference>
<dbReference type="EvolutionaryTrace" id="P0C0B3"/>
<dbReference type="PHI-base" id="PHI:8635"/>
<dbReference type="GO" id="GO:0005737">
    <property type="term" value="C:cytoplasm"/>
    <property type="evidence" value="ECO:0007669"/>
    <property type="project" value="UniProtKB-SubCell"/>
</dbReference>
<dbReference type="GO" id="GO:0016990">
    <property type="term" value="F:arginine deiminase activity"/>
    <property type="evidence" value="ECO:0007669"/>
    <property type="project" value="UniProtKB-UniRule"/>
</dbReference>
<dbReference type="GO" id="GO:0019547">
    <property type="term" value="P:arginine catabolic process to ornithine"/>
    <property type="evidence" value="ECO:0007669"/>
    <property type="project" value="UniProtKB-UniRule"/>
</dbReference>
<dbReference type="GO" id="GO:0019546">
    <property type="term" value="P:arginine deiminase pathway"/>
    <property type="evidence" value="ECO:0007669"/>
    <property type="project" value="TreeGrafter"/>
</dbReference>
<dbReference type="Gene3D" id="1.10.3930.10">
    <property type="entry name" value="Arginine deiminase"/>
    <property type="match status" value="1"/>
</dbReference>
<dbReference type="Gene3D" id="3.75.10.10">
    <property type="entry name" value="L-arginine/glycine Amidinotransferase, Chain A"/>
    <property type="match status" value="1"/>
</dbReference>
<dbReference type="HAMAP" id="MF_00242">
    <property type="entry name" value="Arg_deiminase"/>
    <property type="match status" value="1"/>
</dbReference>
<dbReference type="InterPro" id="IPR003876">
    <property type="entry name" value="Arg_deiminase"/>
</dbReference>
<dbReference type="NCBIfam" id="TIGR01078">
    <property type="entry name" value="arcA"/>
    <property type="match status" value="1"/>
</dbReference>
<dbReference type="NCBIfam" id="NF002381">
    <property type="entry name" value="PRK01388.1"/>
    <property type="match status" value="1"/>
</dbReference>
<dbReference type="PANTHER" id="PTHR47271">
    <property type="entry name" value="ARGININE DEIMINASE"/>
    <property type="match status" value="1"/>
</dbReference>
<dbReference type="PANTHER" id="PTHR47271:SF2">
    <property type="entry name" value="ARGININE DEIMINASE"/>
    <property type="match status" value="1"/>
</dbReference>
<dbReference type="Pfam" id="PF02274">
    <property type="entry name" value="ADI"/>
    <property type="match status" value="1"/>
</dbReference>
<dbReference type="PIRSF" id="PIRSF006356">
    <property type="entry name" value="Arg_deiminase"/>
    <property type="match status" value="1"/>
</dbReference>
<dbReference type="PRINTS" id="PR01466">
    <property type="entry name" value="ARGDEIMINASE"/>
</dbReference>
<dbReference type="SUPFAM" id="SSF55909">
    <property type="entry name" value="Pentein"/>
    <property type="match status" value="1"/>
</dbReference>
<sequence length="411" mass="46297">MTAQTPIHVYSEIGKLKKVLLHRPGKEIENLMPDYLERLLFDDIPFLEDAQKEHDAFAQALRDEGIEVLYLETLAAESLVTPEIREAFIDEYLSEANIRGRATKKAIRELLMAIEDNQELIEKTMAGVQKSELPEIPASEKGLTDLVESNYPFAIDPMPNLYFTRDPFATIGTGVSLNHMFSETRNRETLYGKYIFTHHPIYGGGKVPMVYDRNETTRIEGGDELVLSKDVLAVGISQRTDAASIEKLLVNIFKQNLGFKKVLAFEFANNRKFMHLDTVFTMVDYDKFTIHPEIEGDLRVYSVTYDNEELHIVEEKGDLAELLAANLGVEKVDLIRCGGDNLVAAGREQWNDGSNTLTIAPGVVVVYNRNTITNAILESKGLKLIKIHGSELVRGRGGPRCMSMPFEREDI</sequence>
<name>ARCA_STRPY</name>